<feature type="chain" id="PRO_0000295242" description="Retroelement silencing factor 1">
    <location>
        <begin position="1"/>
        <end position="1747"/>
    </location>
</feature>
<feature type="region of interest" description="Disordered" evidence="2">
    <location>
        <begin position="261"/>
        <end position="280"/>
    </location>
</feature>
<feature type="region of interest" description="Disordered" evidence="2">
    <location>
        <begin position="833"/>
        <end position="856"/>
    </location>
</feature>
<feature type="region of interest" description="Disordered" evidence="2">
    <location>
        <begin position="923"/>
        <end position="956"/>
    </location>
</feature>
<feature type="region of interest" description="Disordered" evidence="2">
    <location>
        <begin position="1073"/>
        <end position="1101"/>
    </location>
</feature>
<feature type="region of interest" description="Disordered" evidence="2">
    <location>
        <begin position="1200"/>
        <end position="1274"/>
    </location>
</feature>
<feature type="region of interest" description="Disordered" evidence="2">
    <location>
        <begin position="1686"/>
        <end position="1716"/>
    </location>
</feature>
<feature type="compositionally biased region" description="Polar residues" evidence="2">
    <location>
        <begin position="261"/>
        <end position="272"/>
    </location>
</feature>
<feature type="compositionally biased region" description="Polar residues" evidence="2">
    <location>
        <begin position="842"/>
        <end position="856"/>
    </location>
</feature>
<feature type="compositionally biased region" description="Basic and acidic residues" evidence="2">
    <location>
        <begin position="937"/>
        <end position="956"/>
    </location>
</feature>
<feature type="compositionally biased region" description="Polar residues" evidence="2">
    <location>
        <begin position="1073"/>
        <end position="1087"/>
    </location>
</feature>
<feature type="compositionally biased region" description="Basic and acidic residues" evidence="2">
    <location>
        <begin position="1089"/>
        <end position="1101"/>
    </location>
</feature>
<feature type="compositionally biased region" description="Basic and acidic residues" evidence="2">
    <location>
        <begin position="1217"/>
        <end position="1226"/>
    </location>
</feature>
<feature type="compositionally biased region" description="Basic and acidic residues" evidence="2">
    <location>
        <begin position="1242"/>
        <end position="1261"/>
    </location>
</feature>
<feature type="compositionally biased region" description="Basic and acidic residues" evidence="2">
    <location>
        <begin position="1689"/>
        <end position="1698"/>
    </location>
</feature>
<feature type="modified residue" description="Phosphoserine" evidence="9">
    <location>
        <position position="221"/>
    </location>
</feature>
<feature type="modified residue" description="Phosphoserine" evidence="1">
    <location>
        <position position="1145"/>
    </location>
</feature>
<feature type="modified residue" description="Phosphothreonine" evidence="9">
    <location>
        <position position="1240"/>
    </location>
</feature>
<feature type="modified residue" description="Phosphoserine" evidence="8 9">
    <location>
        <position position="1358"/>
    </location>
</feature>
<feature type="modified residue" description="Phosphoserine" evidence="9">
    <location>
        <position position="1708"/>
    </location>
</feature>
<feature type="modified residue" description="Phosphoserine" evidence="10">
    <location>
        <position position="1740"/>
    </location>
</feature>
<feature type="cross-link" description="Glycyl lysine isopeptide (Lys-Gly) (interchain with G-Cter in SUMO2)" evidence="11">
    <location>
        <position position="216"/>
    </location>
</feature>
<feature type="cross-link" description="Glycyl lysine isopeptide (Lys-Gly) (interchain with G-Cter in SUMO2)" evidence="11">
    <location>
        <position position="707"/>
    </location>
</feature>
<feature type="cross-link" description="Glycyl lysine isopeptide (Lys-Gly) (interchain with G-Cter in SUMO2)" evidence="11">
    <location>
        <position position="1136"/>
    </location>
</feature>
<feature type="cross-link" description="Glycyl lysine isopeptide (Lys-Gly) (interchain with G-Cter in SUMO2)" evidence="11">
    <location>
        <position position="1528"/>
    </location>
</feature>
<feature type="cross-link" description="Glycyl lysine isopeptide (Lys-Gly) (interchain with G-Cter in SUMO2)" evidence="11">
    <location>
        <position position="1636"/>
    </location>
</feature>
<feature type="cross-link" description="Glycyl lysine isopeptide (Lys-Gly) (interchain with G-Cter in SUMO2)" evidence="11">
    <location>
        <position position="1723"/>
    </location>
</feature>
<feature type="sequence variant" id="VAR_033268" description="In dbSNP:rs7298803.">
    <original>I</original>
    <variation>V</variation>
    <location>
        <position position="59"/>
    </location>
</feature>
<feature type="sequence variant" id="VAR_033269" description="In dbSNP:rs2388981.">
    <original>H</original>
    <variation>Q</variation>
    <location>
        <position position="106"/>
    </location>
</feature>
<feature type="sequence variant" id="VAR_061608" description="In dbSNP:rs61353224.">
    <original>P</original>
    <variation>S</variation>
    <location>
        <position position="147"/>
    </location>
</feature>
<feature type="sequence variant" id="VAR_033270" description="In dbSNP:rs12320740.">
    <original>I</original>
    <variation>V</variation>
    <location>
        <position position="202"/>
    </location>
</feature>
<feature type="sequence variant" id="VAR_033271" description="In dbSNP:rs2166807.">
    <original>L</original>
    <variation>P</variation>
    <location>
        <position position="250"/>
    </location>
</feature>
<feature type="sequence variant" id="VAR_033272" description="In dbSNP:rs16919122." evidence="3">
    <original>R</original>
    <variation>Q</variation>
    <location>
        <position position="309"/>
    </location>
</feature>
<feature type="sequence variant" id="VAR_033273" description="In dbSNP:rs3207618.">
    <original>S</original>
    <variation>N</variation>
    <location>
        <position position="346"/>
    </location>
</feature>
<feature type="sequence variant" id="VAR_033274" description="In dbSNP:rs10771894." evidence="3 4">
    <original>S</original>
    <variation>G</variation>
    <location>
        <position position="352"/>
    </location>
</feature>
<feature type="sequence variant" id="VAR_033275" description="In dbSNP:rs3759302.">
    <original>S</original>
    <variation>T</variation>
    <location>
        <position position="433"/>
    </location>
</feature>
<feature type="sequence variant" id="VAR_033276" description="In dbSNP:rs3759301." evidence="3 4 5">
    <original>S</original>
    <variation>P</variation>
    <location>
        <position position="518"/>
    </location>
</feature>
<feature type="sequence variant" id="VAR_033277" description="In dbSNP:rs3809228.">
    <original>F</original>
    <variation>S</variation>
    <location>
        <position position="954"/>
    </location>
</feature>
<feature type="sequence variant" id="VAR_033278" description="In dbSNP:rs16919127.">
    <original>T</original>
    <variation>K</variation>
    <location>
        <position position="1010"/>
    </location>
</feature>
<feature type="sequence variant" id="VAR_033279" description="In dbSNP:rs3759299." evidence="4">
    <original>S</original>
    <variation>C</variation>
    <location>
        <position position="1208"/>
    </location>
</feature>
<feature type="sequence variant" id="VAR_033280" description="In dbSNP:rs1057994.">
    <original>V</original>
    <variation>I</variation>
    <location>
        <position position="1226"/>
    </location>
</feature>
<feature type="sequence variant" id="VAR_033281" description="In dbSNP:rs3759296.">
    <original>T</original>
    <variation>A</variation>
    <location>
        <position position="1338"/>
    </location>
</feature>
<feature type="sequence variant" id="VAR_061609" description="In dbSNP:rs56682866.">
    <original>M</original>
    <variation>T</variation>
    <location>
        <position position="1479"/>
    </location>
</feature>
<feature type="sequence conflict" description="In Ref. 3; BAA91330." evidence="6" ref="3">
    <original>P</original>
    <variation>L</variation>
    <location>
        <position position="1152"/>
    </location>
</feature>
<feature type="sequence conflict" description="In Ref. 3; BAA91734." evidence="6" ref="3">
    <original>L</original>
    <variation>P</variation>
    <location>
        <position position="1459"/>
    </location>
</feature>
<organism>
    <name type="scientific">Homo sapiens</name>
    <name type="common">Human</name>
    <dbReference type="NCBI Taxonomy" id="9606"/>
    <lineage>
        <taxon>Eukaryota</taxon>
        <taxon>Metazoa</taxon>
        <taxon>Chordata</taxon>
        <taxon>Craniata</taxon>
        <taxon>Vertebrata</taxon>
        <taxon>Euteleostomi</taxon>
        <taxon>Mammalia</taxon>
        <taxon>Eutheria</taxon>
        <taxon>Euarchontoglires</taxon>
        <taxon>Primates</taxon>
        <taxon>Haplorrhini</taxon>
        <taxon>Catarrhini</taxon>
        <taxon>Hominidae</taxon>
        <taxon>Homo</taxon>
    </lineage>
</organism>
<sequence length="1747" mass="194857">MNWNEKPKSATLPPLYPKSQPPFLHQSLINQITTTSQSSFSYPGSNQEACMYPGNSNPISQPLLNIQNYPQQISVSDMHNGTVVASHTSVERITYANVNGPKQLTHNLQMSSGVTQNVWLNSPMRNPVHSHIGATVSHQTDFGANVPNMPALQSQLITSDTYSMQMQMIPSNSTRLPVAYQGNQGLNQSFSEQQVDWTQQCISKGLTYPDYRPPPKLYRYSPQSFLPDSTIQKQNFIPHTSLQVKNSQLLNSVLTLPSRQTSAVPSQQYATQTDKRPPPPPYNCRYGSQPLQSTQHITKHLSMEVPQSREMLSSEIRTSFQQQWQNPNENVSTIGNFTNLKVNTNSKQPFNSPIRSSVDGVQTLAQTNEEKIMDSCNPTSNQVLDTSVAKEKLVRDIKTLVEIKQKFSELARKIKINKDLLMAAGCIKMTNTSYSEPAQNSKLSLKQTAKIQSGPQITPVMPENAERQTPTVVESAETNKTQCMLNSDIQEVNCRRFNQVDSVLPNPVYSEKRPMPDSSHDVKVLTSKTSAVEMTQAVLNTQLSSENVTKVEQNSPAVCETISVPKSMSTEEYKSKIQNENMLLLALLSQARKTQKTVLKDANQTIQDSKPDSCEMNPNTQMTGNQLNLKNMETPSTSNVSGRVLDNSFCSGQESSTKGMPAKSDSSCSMEVLATCLSLWKKQPSDTAKEKECDKLRTNTTAVGISKPANIHVKSPCSVVGNSNSQNKISNPSQQTALSMVMHNYESSGINITKGTELQIAVVSPLVLSEVKTLSVKGITPAVLPETVYPVIKEGSVCSLQNQLAENAKATAALKVDVSGPVASTATSTKIFPLTQKEKQNESTNGNSEVTPNVNQGKHNKLESAIHSPMNDQQISQESRNSTVVSSDTLQIDNICSLVEGDTSYNSQIAKIFSSLPLKMVEPQKPSLPNQQGIGSREPEKQLDNTTENKDFGFQKDKPVQCTDVSHKICDQSKSEPPLESSFNNLETNRVILEKSSLEHATEKSTANDTCSSAAIQEDIYPQEIDASSNYTPQDPARNEIHSDKAPVLYLHDQLSELLKEFPYGIEAVNTREGSVGQQTTYQTSEDQTADKTSSDSKDPADQIQITILSSEQMKEIFPEQDDQPYVVDKLAEPQKEEPITEVVSQCDLQAPAAGQSRDSVILDSEKDDIHCCALGWLSMVYEGVPQCQCNSIKNSSSEEEKQKEQCSPLDTNSCKQGERTSDRDVTVVQFKSLVNNPKTPPDGKSHFPELQDDSRKDTPKTKHKSLPRTEQELVAGQFSSKCDKLNPLQNHKRKKLRFHEVTFHSSNKMTASYEQASQETRQKKHVTQNSRPLKTKTAFLPNKDVYKKHSSLGQSLSPEKIKLKLKSVSFKQKRKLDQGNVLDMEVKKKKHDKQEQKGSVGATFKLGDSLSNPNERAIVKEKMVSNTKSVDTKASSSKFSRILTPKEYLQRQKHKEALSNKASKKICVKNVPCDSEHMRPSKLAVQVESCGKSNEKHSSGVQTSKESLNGLTSHGKNLKIHHSQESKTYNILRNVKEKVGGKQPDKIWIDKTKLDKLTNISNEAQFSQMPPQVKDQKKLYLNRVGFKCTERESISLTKLESSPRKLHKDKRQENKHKTFLPVKGNTEKSNMLEFKLCPDILLKNTNSVEERKDVKPHPRKEQAPLQVSGIKSTKEDWLKFVATKKRTQKDSQERDNVNSRLSKRSFSADGFEMLQNPVKDSKEMFQTYKQMYLEKRSRSLGSSPVK</sequence>
<evidence type="ECO:0000250" key="1">
    <source>
        <dbReference type="UniProtKB" id="Q5DTW7"/>
    </source>
</evidence>
<evidence type="ECO:0000256" key="2">
    <source>
        <dbReference type="SAM" id="MobiDB-lite"/>
    </source>
</evidence>
<evidence type="ECO:0000269" key="3">
    <source>
    </source>
</evidence>
<evidence type="ECO:0000269" key="4">
    <source>
    </source>
</evidence>
<evidence type="ECO:0000269" key="5">
    <source>
    </source>
</evidence>
<evidence type="ECO:0000305" key="6"/>
<evidence type="ECO:0000312" key="7">
    <source>
        <dbReference type="HGNC" id="HGNC:25559"/>
    </source>
</evidence>
<evidence type="ECO:0007744" key="8">
    <source>
    </source>
</evidence>
<evidence type="ECO:0007744" key="9">
    <source>
    </source>
</evidence>
<evidence type="ECO:0007744" key="10">
    <source>
    </source>
</evidence>
<evidence type="ECO:0007744" key="11">
    <source>
    </source>
</evidence>
<dbReference type="EMBL" id="AC016957">
    <property type="status" value="NOT_ANNOTATED_CDS"/>
    <property type="molecule type" value="Genomic_DNA"/>
</dbReference>
<dbReference type="EMBL" id="BC098115">
    <property type="protein sequence ID" value="AAH98115.1"/>
    <property type="molecule type" value="mRNA"/>
</dbReference>
<dbReference type="EMBL" id="BC114509">
    <property type="protein sequence ID" value="AAI14510.1"/>
    <property type="molecule type" value="mRNA"/>
</dbReference>
<dbReference type="EMBL" id="BC114956">
    <property type="protein sequence ID" value="AAI14957.1"/>
    <property type="molecule type" value="mRNA"/>
</dbReference>
<dbReference type="EMBL" id="BC140819">
    <property type="protein sequence ID" value="AAI40820.1"/>
    <property type="molecule type" value="mRNA"/>
</dbReference>
<dbReference type="EMBL" id="AK000703">
    <property type="protein sequence ID" value="BAA91330.1"/>
    <property type="status" value="ALT_SEQ"/>
    <property type="molecule type" value="mRNA"/>
</dbReference>
<dbReference type="EMBL" id="AK001514">
    <property type="protein sequence ID" value="BAA91734.1"/>
    <property type="status" value="ALT_INIT"/>
    <property type="molecule type" value="mRNA"/>
</dbReference>
<dbReference type="EMBL" id="AK092399">
    <property type="status" value="NOT_ANNOTATED_CDS"/>
    <property type="molecule type" value="mRNA"/>
</dbReference>
<dbReference type="EMBL" id="AB046771">
    <property type="protein sequence ID" value="BAB13377.1"/>
    <property type="status" value="ALT_SEQ"/>
    <property type="molecule type" value="mRNA"/>
</dbReference>
<dbReference type="CCDS" id="CCDS8725.2"/>
<dbReference type="RefSeq" id="NP_060639.4">
    <property type="nucleotide sequence ID" value="NM_018169.4"/>
</dbReference>
<dbReference type="RefSeq" id="XP_005253462.1">
    <property type="nucleotide sequence ID" value="XM_005253405.4"/>
</dbReference>
<dbReference type="RefSeq" id="XP_011519024.1">
    <property type="nucleotide sequence ID" value="XM_011520722.2"/>
</dbReference>
<dbReference type="RefSeq" id="XP_016875039.1">
    <property type="nucleotide sequence ID" value="XM_017019550.3"/>
</dbReference>
<dbReference type="BioGRID" id="120493">
    <property type="interactions" value="45"/>
</dbReference>
<dbReference type="DIP" id="DIP-37599N"/>
<dbReference type="FunCoup" id="Q9HCM1">
    <property type="interactions" value="1451"/>
</dbReference>
<dbReference type="IntAct" id="Q9HCM1">
    <property type="interactions" value="34"/>
</dbReference>
<dbReference type="MINT" id="Q9HCM1"/>
<dbReference type="STRING" id="9606.ENSP00000310338"/>
<dbReference type="iPTMnet" id="Q9HCM1"/>
<dbReference type="PhosphoSitePlus" id="Q9HCM1"/>
<dbReference type="BioMuta" id="KIAA1551"/>
<dbReference type="DMDM" id="317373452"/>
<dbReference type="jPOST" id="Q9HCM1"/>
<dbReference type="MassIVE" id="Q9HCM1"/>
<dbReference type="PaxDb" id="9606-ENSP00000310338"/>
<dbReference type="PeptideAtlas" id="Q9HCM1"/>
<dbReference type="ProteomicsDB" id="81754"/>
<dbReference type="Pumba" id="Q9HCM1"/>
<dbReference type="Antibodypedia" id="2871">
    <property type="antibodies" value="27 antibodies from 11 providers"/>
</dbReference>
<dbReference type="DNASU" id="55196"/>
<dbReference type="Ensembl" id="ENST00000312561.9">
    <property type="protein sequence ID" value="ENSP00000310338.4"/>
    <property type="gene ID" value="ENSG00000174718.12"/>
</dbReference>
<dbReference type="GeneID" id="55196"/>
<dbReference type="KEGG" id="hsa:55196"/>
<dbReference type="MANE-Select" id="ENST00000312561.9">
    <property type="protein sequence ID" value="ENSP00000310338.4"/>
    <property type="RefSeq nucleotide sequence ID" value="NM_018169.4"/>
    <property type="RefSeq protein sequence ID" value="NP_060639.4"/>
</dbReference>
<dbReference type="UCSC" id="uc001rks.4">
    <property type="organism name" value="human"/>
</dbReference>
<dbReference type="AGR" id="HGNC:25559"/>
<dbReference type="CTD" id="55196"/>
<dbReference type="DisGeNET" id="55196"/>
<dbReference type="GeneCards" id="RESF1"/>
<dbReference type="HGNC" id="HGNC:25559">
    <property type="gene designation" value="RESF1"/>
</dbReference>
<dbReference type="HPA" id="ENSG00000174718">
    <property type="expression patterns" value="Tissue enhanced (lymphoid)"/>
</dbReference>
<dbReference type="MIM" id="615621">
    <property type="type" value="gene"/>
</dbReference>
<dbReference type="neXtProt" id="NX_Q9HCM1"/>
<dbReference type="OpenTargets" id="ENSG00000174718"/>
<dbReference type="PharmGKB" id="PA143485365"/>
<dbReference type="VEuPathDB" id="HostDB:ENSG00000174718"/>
<dbReference type="eggNOG" id="ENOG502S9FU">
    <property type="taxonomic scope" value="Eukaryota"/>
</dbReference>
<dbReference type="GeneTree" id="ENSGT00390000018491"/>
<dbReference type="HOGENOM" id="CLU_002739_0_0_1"/>
<dbReference type="InParanoid" id="Q9HCM1"/>
<dbReference type="OMA" id="TYKQMYL"/>
<dbReference type="OrthoDB" id="9909281at2759"/>
<dbReference type="PAN-GO" id="Q9HCM1">
    <property type="GO annotations" value="3 GO annotations based on evolutionary models"/>
</dbReference>
<dbReference type="PhylomeDB" id="Q9HCM1"/>
<dbReference type="TreeFam" id="TF336094"/>
<dbReference type="PathwayCommons" id="Q9HCM1"/>
<dbReference type="SignaLink" id="Q9HCM1"/>
<dbReference type="BioGRID-ORCS" id="55196">
    <property type="hits" value="16 hits in 1157 CRISPR screens"/>
</dbReference>
<dbReference type="ChiTaRS" id="KIAA1551">
    <property type="organism name" value="human"/>
</dbReference>
<dbReference type="GenomeRNAi" id="55196"/>
<dbReference type="Pharos" id="Q9HCM1">
    <property type="development level" value="Tdark"/>
</dbReference>
<dbReference type="PRO" id="PR:Q9HCM1"/>
<dbReference type="Proteomes" id="UP000005640">
    <property type="component" value="Chromosome 12"/>
</dbReference>
<dbReference type="RNAct" id="Q9HCM1">
    <property type="molecule type" value="protein"/>
</dbReference>
<dbReference type="Bgee" id="ENSG00000174718">
    <property type="expression patterns" value="Expressed in right uterine tube and 198 other cell types or tissues"/>
</dbReference>
<dbReference type="ExpressionAtlas" id="Q9HCM1">
    <property type="expression patterns" value="baseline and differential"/>
</dbReference>
<dbReference type="GO" id="GO:0005634">
    <property type="term" value="C:nucleus"/>
    <property type="evidence" value="ECO:0000250"/>
    <property type="project" value="UniProtKB"/>
</dbReference>
<dbReference type="GO" id="GO:0042393">
    <property type="term" value="F:histone binding"/>
    <property type="evidence" value="ECO:0000250"/>
    <property type="project" value="UniProtKB"/>
</dbReference>
<dbReference type="GO" id="GO:1990226">
    <property type="term" value="F:histone methyltransferase binding"/>
    <property type="evidence" value="ECO:0000318"/>
    <property type="project" value="GO_Central"/>
</dbReference>
<dbReference type="GO" id="GO:0141005">
    <property type="term" value="P:transposable element silencing by heterochromatin formation"/>
    <property type="evidence" value="ECO:0000250"/>
    <property type="project" value="UniProtKB"/>
</dbReference>
<dbReference type="InterPro" id="IPR027866">
    <property type="entry name" value="RESF1"/>
</dbReference>
<dbReference type="PANTHER" id="PTHR21604">
    <property type="entry name" value="RETROELEMENT SILENCING FACTOR 1"/>
    <property type="match status" value="1"/>
</dbReference>
<dbReference type="PANTHER" id="PTHR21604:SF0">
    <property type="entry name" value="RETROELEMENT SILENCING FACTOR 1"/>
    <property type="match status" value="1"/>
</dbReference>
<dbReference type="Pfam" id="PF15395">
    <property type="entry name" value="DUF4617"/>
    <property type="match status" value="1"/>
</dbReference>
<accession>Q9HCM1</accession>
<accession>B2RTU5</accession>
<accession>Q4KN17</accession>
<accession>Q9NVL6</accession>
<accession>Q9NWP9</accession>
<proteinExistence type="evidence at protein level"/>
<keyword id="KW-1017">Isopeptide bond</keyword>
<keyword id="KW-0539">Nucleus</keyword>
<keyword id="KW-0597">Phosphoprotein</keyword>
<keyword id="KW-1267">Proteomics identification</keyword>
<keyword id="KW-1185">Reference proteome</keyword>
<keyword id="KW-0832">Ubl conjugation</keyword>
<reference key="1">
    <citation type="journal article" date="2006" name="Nature">
        <title>The finished DNA sequence of human chromosome 12.</title>
        <authorList>
            <person name="Scherer S.E."/>
            <person name="Muzny D.M."/>
            <person name="Buhay C.J."/>
            <person name="Chen R."/>
            <person name="Cree A."/>
            <person name="Ding Y."/>
            <person name="Dugan-Rocha S."/>
            <person name="Gill R."/>
            <person name="Gunaratne P."/>
            <person name="Harris R.A."/>
            <person name="Hawes A.C."/>
            <person name="Hernandez J."/>
            <person name="Hodgson A.V."/>
            <person name="Hume J."/>
            <person name="Jackson A."/>
            <person name="Khan Z.M."/>
            <person name="Kovar-Smith C."/>
            <person name="Lewis L.R."/>
            <person name="Lozado R.J."/>
            <person name="Metzker M.L."/>
            <person name="Milosavljevic A."/>
            <person name="Miner G.R."/>
            <person name="Montgomery K.T."/>
            <person name="Morgan M.B."/>
            <person name="Nazareth L.V."/>
            <person name="Scott G."/>
            <person name="Sodergren E."/>
            <person name="Song X.-Z."/>
            <person name="Steffen D."/>
            <person name="Lovering R.C."/>
            <person name="Wheeler D.A."/>
            <person name="Worley K.C."/>
            <person name="Yuan Y."/>
            <person name="Zhang Z."/>
            <person name="Adams C.Q."/>
            <person name="Ansari-Lari M.A."/>
            <person name="Ayele M."/>
            <person name="Brown M.J."/>
            <person name="Chen G."/>
            <person name="Chen Z."/>
            <person name="Clerc-Blankenburg K.P."/>
            <person name="Davis C."/>
            <person name="Delgado O."/>
            <person name="Dinh H.H."/>
            <person name="Draper H."/>
            <person name="Gonzalez-Garay M.L."/>
            <person name="Havlak P."/>
            <person name="Jackson L.R."/>
            <person name="Jacob L.S."/>
            <person name="Kelly S.H."/>
            <person name="Li L."/>
            <person name="Li Z."/>
            <person name="Liu J."/>
            <person name="Liu W."/>
            <person name="Lu J."/>
            <person name="Maheshwari M."/>
            <person name="Nguyen B.-V."/>
            <person name="Okwuonu G.O."/>
            <person name="Pasternak S."/>
            <person name="Perez L.M."/>
            <person name="Plopper F.J.H."/>
            <person name="Santibanez J."/>
            <person name="Shen H."/>
            <person name="Tabor P.E."/>
            <person name="Verduzco D."/>
            <person name="Waldron L."/>
            <person name="Wang Q."/>
            <person name="Williams G.A."/>
            <person name="Zhang J."/>
            <person name="Zhou J."/>
            <person name="Allen C.C."/>
            <person name="Amin A.G."/>
            <person name="Anyalebechi V."/>
            <person name="Bailey M."/>
            <person name="Barbaria J.A."/>
            <person name="Bimage K.E."/>
            <person name="Bryant N.P."/>
            <person name="Burch P.E."/>
            <person name="Burkett C.E."/>
            <person name="Burrell K.L."/>
            <person name="Calderon E."/>
            <person name="Cardenas V."/>
            <person name="Carter K."/>
            <person name="Casias K."/>
            <person name="Cavazos I."/>
            <person name="Cavazos S.R."/>
            <person name="Ceasar H."/>
            <person name="Chacko J."/>
            <person name="Chan S.N."/>
            <person name="Chavez D."/>
            <person name="Christopoulos C."/>
            <person name="Chu J."/>
            <person name="Cockrell R."/>
            <person name="Cox C.D."/>
            <person name="Dang M."/>
            <person name="Dathorne S.R."/>
            <person name="David R."/>
            <person name="Davis C.M."/>
            <person name="Davy-Carroll L."/>
            <person name="Deshazo D.R."/>
            <person name="Donlin J.E."/>
            <person name="D'Souza L."/>
            <person name="Eaves K.A."/>
            <person name="Egan A."/>
            <person name="Emery-Cohen A.J."/>
            <person name="Escotto M."/>
            <person name="Flagg N."/>
            <person name="Forbes L.D."/>
            <person name="Gabisi A.M."/>
            <person name="Garza M."/>
            <person name="Hamilton C."/>
            <person name="Henderson N."/>
            <person name="Hernandez O."/>
            <person name="Hines S."/>
            <person name="Hogues M.E."/>
            <person name="Huang M."/>
            <person name="Idlebird D.G."/>
            <person name="Johnson R."/>
            <person name="Jolivet A."/>
            <person name="Jones S."/>
            <person name="Kagan R."/>
            <person name="King L.M."/>
            <person name="Leal B."/>
            <person name="Lebow H."/>
            <person name="Lee S."/>
            <person name="LeVan J.M."/>
            <person name="Lewis L.C."/>
            <person name="London P."/>
            <person name="Lorensuhewa L.M."/>
            <person name="Loulseged H."/>
            <person name="Lovett D.A."/>
            <person name="Lucier A."/>
            <person name="Lucier R.L."/>
            <person name="Ma J."/>
            <person name="Madu R.C."/>
            <person name="Mapua P."/>
            <person name="Martindale A.D."/>
            <person name="Martinez E."/>
            <person name="Massey E."/>
            <person name="Mawhiney S."/>
            <person name="Meador M.G."/>
            <person name="Mendez S."/>
            <person name="Mercado C."/>
            <person name="Mercado I.C."/>
            <person name="Merritt C.E."/>
            <person name="Miner Z.L."/>
            <person name="Minja E."/>
            <person name="Mitchell T."/>
            <person name="Mohabbat F."/>
            <person name="Mohabbat K."/>
            <person name="Montgomery B."/>
            <person name="Moore N."/>
            <person name="Morris S."/>
            <person name="Munidasa M."/>
            <person name="Ngo R.N."/>
            <person name="Nguyen N.B."/>
            <person name="Nickerson E."/>
            <person name="Nwaokelemeh O.O."/>
            <person name="Nwokenkwo S."/>
            <person name="Obregon M."/>
            <person name="Oguh M."/>
            <person name="Oragunye N."/>
            <person name="Oviedo R.J."/>
            <person name="Parish B.J."/>
            <person name="Parker D.N."/>
            <person name="Parrish J."/>
            <person name="Parks K.L."/>
            <person name="Paul H.A."/>
            <person name="Payton B.A."/>
            <person name="Perez A."/>
            <person name="Perrin W."/>
            <person name="Pickens A."/>
            <person name="Primus E.L."/>
            <person name="Pu L.-L."/>
            <person name="Puazo M."/>
            <person name="Quiles M.M."/>
            <person name="Quiroz J.B."/>
            <person name="Rabata D."/>
            <person name="Reeves K."/>
            <person name="Ruiz S.J."/>
            <person name="Shao H."/>
            <person name="Sisson I."/>
            <person name="Sonaike T."/>
            <person name="Sorelle R.P."/>
            <person name="Sutton A.E."/>
            <person name="Svatek A.F."/>
            <person name="Svetz L.A."/>
            <person name="Tamerisa K.S."/>
            <person name="Taylor T.R."/>
            <person name="Teague B."/>
            <person name="Thomas N."/>
            <person name="Thorn R.D."/>
            <person name="Trejos Z.Y."/>
            <person name="Trevino B.K."/>
            <person name="Ukegbu O.N."/>
            <person name="Urban J.B."/>
            <person name="Vasquez L.I."/>
            <person name="Vera V.A."/>
            <person name="Villasana D.M."/>
            <person name="Wang L."/>
            <person name="Ward-Moore S."/>
            <person name="Warren J.T."/>
            <person name="Wei X."/>
            <person name="White F."/>
            <person name="Williamson A.L."/>
            <person name="Wleczyk R."/>
            <person name="Wooden H.S."/>
            <person name="Wooden S.H."/>
            <person name="Yen J."/>
            <person name="Yoon L."/>
            <person name="Yoon V."/>
            <person name="Zorrilla S.E."/>
            <person name="Nelson D."/>
            <person name="Kucherlapati R."/>
            <person name="Weinstock G."/>
            <person name="Gibbs R.A."/>
        </authorList>
    </citation>
    <scope>NUCLEOTIDE SEQUENCE [LARGE SCALE GENOMIC DNA]</scope>
</reference>
<reference key="2">
    <citation type="journal article" date="2004" name="Genome Res.">
        <title>The status, quality, and expansion of the NIH full-length cDNA project: the Mammalian Gene Collection (MGC).</title>
        <authorList>
            <consortium name="The MGC Project Team"/>
        </authorList>
    </citation>
    <scope>NUCLEOTIDE SEQUENCE [LARGE SCALE MRNA]</scope>
    <scope>VARIANT PRO-518</scope>
    <source>
        <tissue>Brain</tissue>
    </source>
</reference>
<reference key="3">
    <citation type="journal article" date="2004" name="Nat. Genet.">
        <title>Complete sequencing and characterization of 21,243 full-length human cDNAs.</title>
        <authorList>
            <person name="Ota T."/>
            <person name="Suzuki Y."/>
            <person name="Nishikawa T."/>
            <person name="Otsuki T."/>
            <person name="Sugiyama T."/>
            <person name="Irie R."/>
            <person name="Wakamatsu A."/>
            <person name="Hayashi K."/>
            <person name="Sato H."/>
            <person name="Nagai K."/>
            <person name="Kimura K."/>
            <person name="Makita H."/>
            <person name="Sekine M."/>
            <person name="Obayashi M."/>
            <person name="Nishi T."/>
            <person name="Shibahara T."/>
            <person name="Tanaka T."/>
            <person name="Ishii S."/>
            <person name="Yamamoto J."/>
            <person name="Saito K."/>
            <person name="Kawai Y."/>
            <person name="Isono Y."/>
            <person name="Nakamura Y."/>
            <person name="Nagahari K."/>
            <person name="Murakami K."/>
            <person name="Yasuda T."/>
            <person name="Iwayanagi T."/>
            <person name="Wagatsuma M."/>
            <person name="Shiratori A."/>
            <person name="Sudo H."/>
            <person name="Hosoiri T."/>
            <person name="Kaku Y."/>
            <person name="Kodaira H."/>
            <person name="Kondo H."/>
            <person name="Sugawara M."/>
            <person name="Takahashi M."/>
            <person name="Kanda K."/>
            <person name="Yokoi T."/>
            <person name="Furuya T."/>
            <person name="Kikkawa E."/>
            <person name="Omura Y."/>
            <person name="Abe K."/>
            <person name="Kamihara K."/>
            <person name="Katsuta N."/>
            <person name="Sato K."/>
            <person name="Tanikawa M."/>
            <person name="Yamazaki M."/>
            <person name="Ninomiya K."/>
            <person name="Ishibashi T."/>
            <person name="Yamashita H."/>
            <person name="Murakawa K."/>
            <person name="Fujimori K."/>
            <person name="Tanai H."/>
            <person name="Kimata M."/>
            <person name="Watanabe M."/>
            <person name="Hiraoka S."/>
            <person name="Chiba Y."/>
            <person name="Ishida S."/>
            <person name="Ono Y."/>
            <person name="Takiguchi S."/>
            <person name="Watanabe S."/>
            <person name="Yosida M."/>
            <person name="Hotuta T."/>
            <person name="Kusano J."/>
            <person name="Kanehori K."/>
            <person name="Takahashi-Fujii A."/>
            <person name="Hara H."/>
            <person name="Tanase T.-O."/>
            <person name="Nomura Y."/>
            <person name="Togiya S."/>
            <person name="Komai F."/>
            <person name="Hara R."/>
            <person name="Takeuchi K."/>
            <person name="Arita M."/>
            <person name="Imose N."/>
            <person name="Musashino K."/>
            <person name="Yuuki H."/>
            <person name="Oshima A."/>
            <person name="Sasaki N."/>
            <person name="Aotsuka S."/>
            <person name="Yoshikawa Y."/>
            <person name="Matsunawa H."/>
            <person name="Ichihara T."/>
            <person name="Shiohata N."/>
            <person name="Sano S."/>
            <person name="Moriya S."/>
            <person name="Momiyama H."/>
            <person name="Satoh N."/>
            <person name="Takami S."/>
            <person name="Terashima Y."/>
            <person name="Suzuki O."/>
            <person name="Nakagawa S."/>
            <person name="Senoh A."/>
            <person name="Mizoguchi H."/>
            <person name="Goto Y."/>
            <person name="Shimizu F."/>
            <person name="Wakebe H."/>
            <person name="Hishigaki H."/>
            <person name="Watanabe T."/>
            <person name="Sugiyama A."/>
            <person name="Takemoto M."/>
            <person name="Kawakami B."/>
            <person name="Yamazaki M."/>
            <person name="Watanabe K."/>
            <person name="Kumagai A."/>
            <person name="Itakura S."/>
            <person name="Fukuzumi Y."/>
            <person name="Fujimori Y."/>
            <person name="Komiyama M."/>
            <person name="Tashiro H."/>
            <person name="Tanigami A."/>
            <person name="Fujiwara T."/>
            <person name="Ono T."/>
            <person name="Yamada K."/>
            <person name="Fujii Y."/>
            <person name="Ozaki K."/>
            <person name="Hirao M."/>
            <person name="Ohmori Y."/>
            <person name="Kawabata A."/>
            <person name="Hikiji T."/>
            <person name="Kobatake N."/>
            <person name="Inagaki H."/>
            <person name="Ikema Y."/>
            <person name="Okamoto S."/>
            <person name="Okitani R."/>
            <person name="Kawakami T."/>
            <person name="Noguchi S."/>
            <person name="Itoh T."/>
            <person name="Shigeta K."/>
            <person name="Senba T."/>
            <person name="Matsumura K."/>
            <person name="Nakajima Y."/>
            <person name="Mizuno T."/>
            <person name="Morinaga M."/>
            <person name="Sasaki M."/>
            <person name="Togashi T."/>
            <person name="Oyama M."/>
            <person name="Hata H."/>
            <person name="Watanabe M."/>
            <person name="Komatsu T."/>
            <person name="Mizushima-Sugano J."/>
            <person name="Satoh T."/>
            <person name="Shirai Y."/>
            <person name="Takahashi Y."/>
            <person name="Nakagawa K."/>
            <person name="Okumura K."/>
            <person name="Nagase T."/>
            <person name="Nomura N."/>
            <person name="Kikuchi H."/>
            <person name="Masuho Y."/>
            <person name="Yamashita R."/>
            <person name="Nakai K."/>
            <person name="Yada T."/>
            <person name="Nakamura Y."/>
            <person name="Ohara O."/>
            <person name="Isogai T."/>
            <person name="Sugano S."/>
        </authorList>
    </citation>
    <scope>NUCLEOTIDE SEQUENCE [LARGE SCALE MRNA] OF 1-1293 AND 1369-1747</scope>
    <scope>VARIANTS GLY-352; PRO-518 AND CYS-1208</scope>
    <source>
        <tissue>Ileal mucosa</tissue>
        <tissue>Placenta</tissue>
    </source>
</reference>
<reference key="4">
    <citation type="journal article" date="2000" name="DNA Res.">
        <title>Prediction of the coding sequences of unidentified human genes. XVIII. The complete sequences of 100 new cDNA clones from brain which code for large proteins in vitro.</title>
        <authorList>
            <person name="Nagase T."/>
            <person name="Kikuno R."/>
            <person name="Nakayama M."/>
            <person name="Hirosawa M."/>
            <person name="Ohara O."/>
        </authorList>
    </citation>
    <scope>NUCLEOTIDE SEQUENCE [LARGE SCALE MRNA] OF 167-1395</scope>
    <scope>VARIANTS GLN-309; GLY-352 AND PRO-518</scope>
    <source>
        <tissue>Brain</tissue>
    </source>
</reference>
<reference key="5">
    <citation type="journal article" date="2009" name="Sci. Signal.">
        <title>Quantitative phosphoproteomic analysis of T cell receptor signaling reveals system-wide modulation of protein-protein interactions.</title>
        <authorList>
            <person name="Mayya V."/>
            <person name="Lundgren D.H."/>
            <person name="Hwang S.-I."/>
            <person name="Rezaul K."/>
            <person name="Wu L."/>
            <person name="Eng J.K."/>
            <person name="Rodionov V."/>
            <person name="Han D.K."/>
        </authorList>
    </citation>
    <scope>IDENTIFICATION BY MASS SPECTROMETRY [LARGE SCALE ANALYSIS]</scope>
    <source>
        <tissue>Leukemic T-cell</tissue>
    </source>
</reference>
<reference key="6">
    <citation type="journal article" date="2011" name="Sci. Signal.">
        <title>System-wide temporal characterization of the proteome and phosphoproteome of human embryonic stem cell differentiation.</title>
        <authorList>
            <person name="Rigbolt K.T."/>
            <person name="Prokhorova T.A."/>
            <person name="Akimov V."/>
            <person name="Henningsen J."/>
            <person name="Johansen P.T."/>
            <person name="Kratchmarova I."/>
            <person name="Kassem M."/>
            <person name="Mann M."/>
            <person name="Olsen J.V."/>
            <person name="Blagoev B."/>
        </authorList>
    </citation>
    <scope>PHOSPHORYLATION [LARGE SCALE ANALYSIS] AT SER-1358</scope>
    <scope>IDENTIFICATION BY MASS SPECTROMETRY [LARGE SCALE ANALYSIS]</scope>
</reference>
<reference key="7">
    <citation type="journal article" date="2013" name="J. Proteome Res.">
        <title>Toward a comprehensive characterization of a human cancer cell phosphoproteome.</title>
        <authorList>
            <person name="Zhou H."/>
            <person name="Di Palma S."/>
            <person name="Preisinger C."/>
            <person name="Peng M."/>
            <person name="Polat A.N."/>
            <person name="Heck A.J."/>
            <person name="Mohammed S."/>
        </authorList>
    </citation>
    <scope>PHOSPHORYLATION [LARGE SCALE ANALYSIS] AT SER-221; THR-1240; SER-1358 AND SER-1708</scope>
    <scope>IDENTIFICATION BY MASS SPECTROMETRY [LARGE SCALE ANALYSIS]</scope>
    <source>
        <tissue>Cervix carcinoma</tissue>
        <tissue>Erythroleukemia</tissue>
    </source>
</reference>
<reference key="8">
    <citation type="journal article" date="2014" name="J. Proteomics">
        <title>An enzyme assisted RP-RPLC approach for in-depth analysis of human liver phosphoproteome.</title>
        <authorList>
            <person name="Bian Y."/>
            <person name="Song C."/>
            <person name="Cheng K."/>
            <person name="Dong M."/>
            <person name="Wang F."/>
            <person name="Huang J."/>
            <person name="Sun D."/>
            <person name="Wang L."/>
            <person name="Ye M."/>
            <person name="Zou H."/>
        </authorList>
    </citation>
    <scope>PHOSPHORYLATION [LARGE SCALE ANALYSIS] AT SER-1740</scope>
    <scope>IDENTIFICATION BY MASS SPECTROMETRY [LARGE SCALE ANALYSIS]</scope>
    <source>
        <tissue>Liver</tissue>
    </source>
</reference>
<reference key="9">
    <citation type="journal article" date="2017" name="Nat. Struct. Mol. Biol.">
        <title>Site-specific mapping of the human SUMO proteome reveals co-modification with phosphorylation.</title>
        <authorList>
            <person name="Hendriks I.A."/>
            <person name="Lyon D."/>
            <person name="Young C."/>
            <person name="Jensen L.J."/>
            <person name="Vertegaal A.C."/>
            <person name="Nielsen M.L."/>
        </authorList>
    </citation>
    <scope>SUMOYLATION [LARGE SCALE ANALYSIS] AT LYS-216; LYS-707; LYS-1136; LYS-1528; LYS-1636 AND LYS-1723</scope>
    <scope>IDENTIFICATION BY MASS SPECTROMETRY [LARGE SCALE ANALYSIS]</scope>
</reference>
<comment type="function">
    <text evidence="1">Plays a role in the regulation of imprinted gene expression, regulates repressive epigenetic modifications associated with SETDB1. Required for the recruitment or accumulation of SETDB1 to the endogenous retroviruses (ERVs) and maintenance of repressive chromatin configuration, contributing to a subset of the SETDB1-dependent ERV silencing in embryonic stem cells.</text>
</comment>
<comment type="subunit">
    <text evidence="1">Interacts with SETDB1.</text>
</comment>
<comment type="interaction">
    <interactant intactId="EBI-308368">
        <id>Q9HCM1</id>
    </interactant>
    <interactant intactId="EBI-11958506">
        <id>O76013-2</id>
        <label>KRT36</label>
    </interactant>
    <organismsDiffer>false</organismsDiffer>
    <experiments>3</experiments>
</comment>
<comment type="interaction">
    <interactant intactId="EBI-308368">
        <id>Q9HCM1</id>
    </interactant>
    <interactant intactId="EBI-9996498">
        <id>O43790</id>
        <label>KRT86</label>
    </interactant>
    <organismsDiffer>false</organismsDiffer>
    <experiments>3</experiments>
</comment>
<comment type="subcellular location">
    <subcellularLocation>
        <location evidence="1">Nucleus</location>
    </subcellularLocation>
    <text evidence="1">Localizes around gamma-tubulin during M phase.</text>
</comment>
<comment type="sequence caution" evidence="6">
    <conflict type="miscellaneous discrepancy">
        <sequence resource="EMBL-CDS" id="BAA91330"/>
    </conflict>
    <text>Contaminating sequence. Potential poly-A sequence.</text>
</comment>
<comment type="sequence caution" evidence="6">
    <conflict type="erroneous initiation">
        <sequence resource="EMBL-CDS" id="BAA91734"/>
    </conflict>
    <text>Truncated N-terminus.</text>
</comment>
<comment type="sequence caution" evidence="6">
    <conflict type="miscellaneous discrepancy">
        <sequence resource="EMBL-CDS" id="BAB13377"/>
    </conflict>
    <text>Contaminating sequence. Sequence of unknown origin in the C-terminal part.</text>
</comment>
<protein>
    <recommendedName>
        <fullName evidence="6">Retroelement silencing factor 1</fullName>
    </recommendedName>
</protein>
<gene>
    <name evidence="7" type="primary">RESF1</name>
    <name type="synonym">C12orf35</name>
    <name type="synonym">KIAA1551</name>
</gene>
<name>RESF1_HUMAN</name>